<accession>A4YCY7</accession>
<dbReference type="EMBL" id="CP000682">
    <property type="protein sequence ID" value="ABP94289.1"/>
    <property type="molecule type" value="Genomic_DNA"/>
</dbReference>
<dbReference type="RefSeq" id="WP_011921258.1">
    <property type="nucleotide sequence ID" value="NC_009440.1"/>
</dbReference>
<dbReference type="SMR" id="A4YCY7"/>
<dbReference type="STRING" id="399549.Msed_0112"/>
<dbReference type="GeneID" id="91754548"/>
<dbReference type="KEGG" id="mse:Msed_0112"/>
<dbReference type="eggNOG" id="arCOG04086">
    <property type="taxonomic scope" value="Archaea"/>
</dbReference>
<dbReference type="HOGENOM" id="CLU_055156_6_0_2"/>
<dbReference type="Proteomes" id="UP000000242">
    <property type="component" value="Chromosome"/>
</dbReference>
<dbReference type="GO" id="GO:0022625">
    <property type="term" value="C:cytosolic large ribosomal subunit"/>
    <property type="evidence" value="ECO:0007669"/>
    <property type="project" value="TreeGrafter"/>
</dbReference>
<dbReference type="GO" id="GO:0003723">
    <property type="term" value="F:RNA binding"/>
    <property type="evidence" value="ECO:0007669"/>
    <property type="project" value="TreeGrafter"/>
</dbReference>
<dbReference type="GO" id="GO:0003735">
    <property type="term" value="F:structural constituent of ribosome"/>
    <property type="evidence" value="ECO:0007669"/>
    <property type="project" value="InterPro"/>
</dbReference>
<dbReference type="GO" id="GO:0000463">
    <property type="term" value="P:maturation of LSU-rRNA from tricistronic rRNA transcript (SSU-rRNA, 5.8S rRNA, LSU-rRNA)"/>
    <property type="evidence" value="ECO:0007669"/>
    <property type="project" value="TreeGrafter"/>
</dbReference>
<dbReference type="GO" id="GO:0006412">
    <property type="term" value="P:translation"/>
    <property type="evidence" value="ECO:0007669"/>
    <property type="project" value="UniProtKB-UniRule"/>
</dbReference>
<dbReference type="CDD" id="cd01657">
    <property type="entry name" value="Ribosomal_L7_archeal_euk"/>
    <property type="match status" value="1"/>
</dbReference>
<dbReference type="Gene3D" id="1.10.15.30">
    <property type="match status" value="1"/>
</dbReference>
<dbReference type="Gene3D" id="3.30.1390.20">
    <property type="entry name" value="Ribosomal protein L30, ferredoxin-like fold domain"/>
    <property type="match status" value="1"/>
</dbReference>
<dbReference type="HAMAP" id="MF_01371_A">
    <property type="entry name" value="Ribosomal_uL30_A"/>
    <property type="match status" value="1"/>
</dbReference>
<dbReference type="InterPro" id="IPR036919">
    <property type="entry name" value="Ribo_uL30_ferredoxin-like_sf"/>
</dbReference>
<dbReference type="InterPro" id="IPR039699">
    <property type="entry name" value="Ribosomal_uL30"/>
</dbReference>
<dbReference type="InterPro" id="IPR005997">
    <property type="entry name" value="Ribosomal_uL30_arc"/>
</dbReference>
<dbReference type="InterPro" id="IPR035808">
    <property type="entry name" value="Ribosomal_uL30_euk_arc"/>
</dbReference>
<dbReference type="InterPro" id="IPR016082">
    <property type="entry name" value="Ribosomal_uL30_ferredoxin-like"/>
</dbReference>
<dbReference type="NCBIfam" id="NF004711">
    <property type="entry name" value="PRK06049.1"/>
    <property type="match status" value="1"/>
</dbReference>
<dbReference type="NCBIfam" id="TIGR01309">
    <property type="entry name" value="uL30_arch"/>
    <property type="match status" value="1"/>
</dbReference>
<dbReference type="PANTHER" id="PTHR11524">
    <property type="entry name" value="60S RIBOSOMAL PROTEIN L7"/>
    <property type="match status" value="1"/>
</dbReference>
<dbReference type="PANTHER" id="PTHR11524:SF16">
    <property type="entry name" value="LARGE RIBOSOMAL SUBUNIT PROTEIN UL30"/>
    <property type="match status" value="1"/>
</dbReference>
<dbReference type="Pfam" id="PF00327">
    <property type="entry name" value="Ribosomal_L30"/>
    <property type="match status" value="1"/>
</dbReference>
<dbReference type="SUPFAM" id="SSF55129">
    <property type="entry name" value="Ribosomal protein L30p/L7e"/>
    <property type="match status" value="1"/>
</dbReference>
<keyword id="KW-1185">Reference proteome</keyword>
<keyword id="KW-0687">Ribonucleoprotein</keyword>
<keyword id="KW-0689">Ribosomal protein</keyword>
<comment type="subunit">
    <text evidence="1">Part of the 50S ribosomal subunit.</text>
</comment>
<comment type="similarity">
    <text evidence="1">Belongs to the universal ribosomal protein uL30 family.</text>
</comment>
<protein>
    <recommendedName>
        <fullName evidence="1">Large ribosomal subunit protein uL30</fullName>
    </recommendedName>
    <alternativeName>
        <fullName evidence="2">50S ribosomal protein L30</fullName>
    </alternativeName>
</protein>
<proteinExistence type="inferred from homology"/>
<gene>
    <name evidence="1" type="primary">rpl30</name>
    <name type="ordered locus">Msed_0112</name>
</gene>
<evidence type="ECO:0000255" key="1">
    <source>
        <dbReference type="HAMAP-Rule" id="MF_01371"/>
    </source>
</evidence>
<evidence type="ECO:0000305" key="2"/>
<organism>
    <name type="scientific">Metallosphaera sedula (strain ATCC 51363 / DSM 5348 / JCM 9185 / NBRC 15509 / TH2)</name>
    <dbReference type="NCBI Taxonomy" id="399549"/>
    <lineage>
        <taxon>Archaea</taxon>
        <taxon>Thermoproteota</taxon>
        <taxon>Thermoprotei</taxon>
        <taxon>Sulfolobales</taxon>
        <taxon>Sulfolobaceae</taxon>
        <taxon>Metallosphaera</taxon>
    </lineage>
</organism>
<sequence length="153" mass="17196">MSSILIVRIRGSASTPWDLQEVLEMLRLSKQYSAMVYPKQDDIVGMVRKVQSYVTWGELNMDGAKALMARIETVKGALDQSFIEKELGLSTEDFIKKLVDGELKLNSIPSIKLPIRLHPPRKGFKGKINSFIGSGGELGYRGEKINELVRRMV</sequence>
<name>RL30_METS5</name>
<feature type="chain" id="PRO_0000347164" description="Large ribosomal subunit protein uL30">
    <location>
        <begin position="1"/>
        <end position="153"/>
    </location>
</feature>
<reference key="1">
    <citation type="journal article" date="2008" name="Appl. Environ. Microbiol.">
        <title>The genome sequence of the metal-mobilizing, extremely thermoacidophilic archaeon Metallosphaera sedula provides insights into bioleaching-associated metabolism.</title>
        <authorList>
            <person name="Auernik K.S."/>
            <person name="Maezato Y."/>
            <person name="Blum P.H."/>
            <person name="Kelly R.M."/>
        </authorList>
    </citation>
    <scope>NUCLEOTIDE SEQUENCE [LARGE SCALE GENOMIC DNA]</scope>
    <source>
        <strain>ATCC 51363 / DSM 5348 / JCM 9185 / NBRC 15509 / TH2</strain>
    </source>
</reference>